<reference key="1">
    <citation type="submission" date="2005-01" db="EMBL/GenBank/DDBJ databases">
        <title>A superfamily of membrane-associated DHHC type zinc finger proteins.</title>
        <authorList>
            <person name="Huang C.-H."/>
            <person name="Chen Y."/>
            <person name="Peng J."/>
            <person name="Ye T."/>
        </authorList>
    </citation>
    <scope>NUCLEOTIDE SEQUENCE [MRNA]</scope>
</reference>
<reference key="2">
    <citation type="journal article" date="2004" name="Nature">
        <title>Genome sequence of the Brown Norway rat yields insights into mammalian evolution.</title>
        <authorList>
            <person name="Gibbs R.A."/>
            <person name="Weinstock G.M."/>
            <person name="Metzker M.L."/>
            <person name="Muzny D.M."/>
            <person name="Sodergren E.J."/>
            <person name="Scherer S."/>
            <person name="Scott G."/>
            <person name="Steffen D."/>
            <person name="Worley K.C."/>
            <person name="Burch P.E."/>
            <person name="Okwuonu G."/>
            <person name="Hines S."/>
            <person name="Lewis L."/>
            <person name="Deramo C."/>
            <person name="Delgado O."/>
            <person name="Dugan-Rocha S."/>
            <person name="Miner G."/>
            <person name="Morgan M."/>
            <person name="Hawes A."/>
            <person name="Gill R."/>
            <person name="Holt R.A."/>
            <person name="Adams M.D."/>
            <person name="Amanatides P.G."/>
            <person name="Baden-Tillson H."/>
            <person name="Barnstead M."/>
            <person name="Chin S."/>
            <person name="Evans C.A."/>
            <person name="Ferriera S."/>
            <person name="Fosler C."/>
            <person name="Glodek A."/>
            <person name="Gu Z."/>
            <person name="Jennings D."/>
            <person name="Kraft C.L."/>
            <person name="Nguyen T."/>
            <person name="Pfannkoch C.M."/>
            <person name="Sitter C."/>
            <person name="Sutton G.G."/>
            <person name="Venter J.C."/>
            <person name="Woodage T."/>
            <person name="Smith D."/>
            <person name="Lee H.-M."/>
            <person name="Gustafson E."/>
            <person name="Cahill P."/>
            <person name="Kana A."/>
            <person name="Doucette-Stamm L."/>
            <person name="Weinstock K."/>
            <person name="Fechtel K."/>
            <person name="Weiss R.B."/>
            <person name="Dunn D.M."/>
            <person name="Green E.D."/>
            <person name="Blakesley R.W."/>
            <person name="Bouffard G.G."/>
            <person name="De Jong P.J."/>
            <person name="Osoegawa K."/>
            <person name="Zhu B."/>
            <person name="Marra M."/>
            <person name="Schein J."/>
            <person name="Bosdet I."/>
            <person name="Fjell C."/>
            <person name="Jones S."/>
            <person name="Krzywinski M."/>
            <person name="Mathewson C."/>
            <person name="Siddiqui A."/>
            <person name="Wye N."/>
            <person name="McPherson J."/>
            <person name="Zhao S."/>
            <person name="Fraser C.M."/>
            <person name="Shetty J."/>
            <person name="Shatsman S."/>
            <person name="Geer K."/>
            <person name="Chen Y."/>
            <person name="Abramzon S."/>
            <person name="Nierman W.C."/>
            <person name="Havlak P.H."/>
            <person name="Chen R."/>
            <person name="Durbin K.J."/>
            <person name="Egan A."/>
            <person name="Ren Y."/>
            <person name="Song X.-Z."/>
            <person name="Li B."/>
            <person name="Liu Y."/>
            <person name="Qin X."/>
            <person name="Cawley S."/>
            <person name="Cooney A.J."/>
            <person name="D'Souza L.M."/>
            <person name="Martin K."/>
            <person name="Wu J.Q."/>
            <person name="Gonzalez-Garay M.L."/>
            <person name="Jackson A.R."/>
            <person name="Kalafus K.J."/>
            <person name="McLeod M.P."/>
            <person name="Milosavljevic A."/>
            <person name="Virk D."/>
            <person name="Volkov A."/>
            <person name="Wheeler D.A."/>
            <person name="Zhang Z."/>
            <person name="Bailey J.A."/>
            <person name="Eichler E.E."/>
            <person name="Tuzun E."/>
            <person name="Birney E."/>
            <person name="Mongin E."/>
            <person name="Ureta-Vidal A."/>
            <person name="Woodwark C."/>
            <person name="Zdobnov E."/>
            <person name="Bork P."/>
            <person name="Suyama M."/>
            <person name="Torrents D."/>
            <person name="Alexandersson M."/>
            <person name="Trask B.J."/>
            <person name="Young J.M."/>
            <person name="Huang H."/>
            <person name="Wang H."/>
            <person name="Xing H."/>
            <person name="Daniels S."/>
            <person name="Gietzen D."/>
            <person name="Schmidt J."/>
            <person name="Stevens K."/>
            <person name="Vitt U."/>
            <person name="Wingrove J."/>
            <person name="Camara F."/>
            <person name="Mar Alba M."/>
            <person name="Abril J.F."/>
            <person name="Guigo R."/>
            <person name="Smit A."/>
            <person name="Dubchak I."/>
            <person name="Rubin E.M."/>
            <person name="Couronne O."/>
            <person name="Poliakov A."/>
            <person name="Huebner N."/>
            <person name="Ganten D."/>
            <person name="Goesele C."/>
            <person name="Hummel O."/>
            <person name="Kreitler T."/>
            <person name="Lee Y.-A."/>
            <person name="Monti J."/>
            <person name="Schulz H."/>
            <person name="Zimdahl H."/>
            <person name="Himmelbauer H."/>
            <person name="Lehrach H."/>
            <person name="Jacob H.J."/>
            <person name="Bromberg S."/>
            <person name="Gullings-Handley J."/>
            <person name="Jensen-Seaman M.I."/>
            <person name="Kwitek A.E."/>
            <person name="Lazar J."/>
            <person name="Pasko D."/>
            <person name="Tonellato P.J."/>
            <person name="Twigger S."/>
            <person name="Ponting C.P."/>
            <person name="Duarte J.M."/>
            <person name="Rice S."/>
            <person name="Goodstadt L."/>
            <person name="Beatson S.A."/>
            <person name="Emes R.D."/>
            <person name="Winter E.E."/>
            <person name="Webber C."/>
            <person name="Brandt P."/>
            <person name="Nyakatura G."/>
            <person name="Adetobi M."/>
            <person name="Chiaromonte F."/>
            <person name="Elnitski L."/>
            <person name="Eswara P."/>
            <person name="Hardison R.C."/>
            <person name="Hou M."/>
            <person name="Kolbe D."/>
            <person name="Makova K."/>
            <person name="Miller W."/>
            <person name="Nekrutenko A."/>
            <person name="Riemer C."/>
            <person name="Schwartz S."/>
            <person name="Taylor J."/>
            <person name="Yang S."/>
            <person name="Zhang Y."/>
            <person name="Lindpaintner K."/>
            <person name="Andrews T.D."/>
            <person name="Caccamo M."/>
            <person name="Clamp M."/>
            <person name="Clarke L."/>
            <person name="Curwen V."/>
            <person name="Durbin R.M."/>
            <person name="Eyras E."/>
            <person name="Searle S.M."/>
            <person name="Cooper G.M."/>
            <person name="Batzoglou S."/>
            <person name="Brudno M."/>
            <person name="Sidow A."/>
            <person name="Stone E.A."/>
            <person name="Payseur B.A."/>
            <person name="Bourque G."/>
            <person name="Lopez-Otin C."/>
            <person name="Puente X.S."/>
            <person name="Chakrabarti K."/>
            <person name="Chatterji S."/>
            <person name="Dewey C."/>
            <person name="Pachter L."/>
            <person name="Bray N."/>
            <person name="Yap V.B."/>
            <person name="Caspi A."/>
            <person name="Tesler G."/>
            <person name="Pevzner P.A."/>
            <person name="Haussler D."/>
            <person name="Roskin K.M."/>
            <person name="Baertsch R."/>
            <person name="Clawson H."/>
            <person name="Furey T.S."/>
            <person name="Hinrichs A.S."/>
            <person name="Karolchik D."/>
            <person name="Kent W.J."/>
            <person name="Rosenbloom K.R."/>
            <person name="Trumbower H."/>
            <person name="Weirauch M."/>
            <person name="Cooper D.N."/>
            <person name="Stenson P.D."/>
            <person name="Ma B."/>
            <person name="Brent M."/>
            <person name="Arumugam M."/>
            <person name="Shteynberg D."/>
            <person name="Copley R.R."/>
            <person name="Taylor M.S."/>
            <person name="Riethman H."/>
            <person name="Mudunuri U."/>
            <person name="Peterson J."/>
            <person name="Guyer M."/>
            <person name="Felsenfeld A."/>
            <person name="Old S."/>
            <person name="Mockrin S."/>
            <person name="Collins F.S."/>
        </authorList>
    </citation>
    <scope>NUCLEOTIDE SEQUENCE [LARGE SCALE GENOMIC DNA]</scope>
    <source>
        <strain>Brown Norway</strain>
    </source>
</reference>
<reference key="3">
    <citation type="submission" date="2005-09" db="EMBL/GenBank/DDBJ databases">
        <authorList>
            <person name="Mural R.J."/>
            <person name="Adams M.D."/>
            <person name="Myers E.W."/>
            <person name="Smith H.O."/>
            <person name="Venter J.C."/>
        </authorList>
    </citation>
    <scope>NUCLEOTIDE SEQUENCE [LARGE SCALE GENOMIC DNA]</scope>
</reference>
<reference key="4">
    <citation type="journal article" date="2004" name="Genome Res.">
        <title>The status, quality, and expansion of the NIH full-length cDNA project: the Mammalian Gene Collection (MGC).</title>
        <authorList>
            <consortium name="The MGC Project Team"/>
        </authorList>
    </citation>
    <scope>NUCLEOTIDE SEQUENCE [LARGE SCALE MRNA]</scope>
    <source>
        <tissue>Placenta</tissue>
    </source>
</reference>
<reference key="5">
    <citation type="journal article" date="2009" name="J. Cell Biol.">
        <title>Mobile DHHC palmitoylating enzyme mediates activity-sensitive synaptic targeting of PSD-95.</title>
        <authorList>
            <person name="Noritake J."/>
            <person name="Fukata Y."/>
            <person name="Iwanaga T."/>
            <person name="Hosomi N."/>
            <person name="Tsutsumi R."/>
            <person name="Matsuda N."/>
            <person name="Tani H."/>
            <person name="Iwanari H."/>
            <person name="Mochizuki Y."/>
            <person name="Kodama T."/>
            <person name="Matsuura Y."/>
            <person name="Bredt D.S."/>
            <person name="Hamakubo T."/>
            <person name="Fukata M."/>
        </authorList>
    </citation>
    <scope>FUNCTION</scope>
    <scope>SUBCELLULAR LOCATION</scope>
</reference>
<gene>
    <name evidence="8" type="primary">Zdhhc3</name>
</gene>
<proteinExistence type="evidence at transcript level"/>
<keyword id="KW-0012">Acyltransferase</keyword>
<keyword id="KW-0333">Golgi apparatus</keyword>
<keyword id="KW-0449">Lipoprotein</keyword>
<keyword id="KW-0472">Membrane</keyword>
<keyword id="KW-0564">Palmitate</keyword>
<keyword id="KW-0597">Phosphoprotein</keyword>
<keyword id="KW-1185">Reference proteome</keyword>
<keyword id="KW-0808">Transferase</keyword>
<keyword id="KW-0812">Transmembrane</keyword>
<keyword id="KW-1133">Transmembrane helix</keyword>
<sequence>MMLIPTHHFRDIERKPEYLQPEKCAPPPFPGPVGTMWFIRDGCGIACAIVTWFLVLYAEFVVLFVMLIPSRDYAYSIINGIVFNLLAFLALASHCRAMLTDPGAVPKGNATKEFIESLQLKPGQVVYKCPKCCSIKPDRAHHCSVCKRCIRKMDHHCPWVNNCVGENNQKYFVLFTMYIALISLHALIMVGFHFLHCFEEDWTKCSSFSPPTTVILLILLCFEALLFLIFTSVMFGTQVHSICTDETGIEQLKKEERRWAKKTKWMNMKAVFGHPFSLGWASPFATPDQGKADPYQYVV</sequence>
<feature type="chain" id="PRO_0000449923" description="Palmitoyltransferase ZDHHC3">
    <location>
        <begin position="1"/>
        <end position="299"/>
    </location>
</feature>
<feature type="topological domain" description="Cytoplasmic" evidence="7">
    <location>
        <begin position="1"/>
        <end position="47"/>
    </location>
</feature>
<feature type="transmembrane region" description="Helical" evidence="4">
    <location>
        <begin position="48"/>
        <end position="68"/>
    </location>
</feature>
<feature type="topological domain" description="Lumenal" evidence="7">
    <location>
        <begin position="69"/>
        <end position="72"/>
    </location>
</feature>
<feature type="transmembrane region" description="Helical" evidence="4">
    <location>
        <begin position="73"/>
        <end position="93"/>
    </location>
</feature>
<feature type="topological domain" description="Cytoplasmic" evidence="7">
    <location>
        <begin position="94"/>
        <end position="171"/>
    </location>
</feature>
<feature type="transmembrane region" description="Helical" evidence="4">
    <location>
        <begin position="172"/>
        <end position="192"/>
    </location>
</feature>
<feature type="topological domain" description="Lumenal" evidence="7">
    <location>
        <begin position="193"/>
        <end position="214"/>
    </location>
</feature>
<feature type="transmembrane region" description="Helical" evidence="4">
    <location>
        <begin position="215"/>
        <end position="235"/>
    </location>
</feature>
<feature type="topological domain" description="Cytoplasmic" evidence="7">
    <location>
        <begin position="236"/>
        <end position="299"/>
    </location>
</feature>
<feature type="domain" description="DHHC" evidence="5">
    <location>
        <begin position="128"/>
        <end position="254"/>
    </location>
</feature>
<feature type="active site" description="S-palmitoyl cysteine intermediate" evidence="5">
    <location>
        <position position="157"/>
    </location>
</feature>
<feature type="modified residue" description="Phosphotyrosine" evidence="2">
    <location>
        <position position="18"/>
    </location>
</feature>
<feature type="lipid moiety-binding region" description="S-palmitoyl cysteine" evidence="2">
    <location>
        <position position="146"/>
    </location>
</feature>
<organism>
    <name type="scientific">Rattus norvegicus</name>
    <name type="common">Rat</name>
    <dbReference type="NCBI Taxonomy" id="10116"/>
    <lineage>
        <taxon>Eukaryota</taxon>
        <taxon>Metazoa</taxon>
        <taxon>Chordata</taxon>
        <taxon>Craniata</taxon>
        <taxon>Vertebrata</taxon>
        <taxon>Euteleostomi</taxon>
        <taxon>Mammalia</taxon>
        <taxon>Eutheria</taxon>
        <taxon>Euarchontoglires</taxon>
        <taxon>Glires</taxon>
        <taxon>Rodentia</taxon>
        <taxon>Myomorpha</taxon>
        <taxon>Muroidea</taxon>
        <taxon>Muridae</taxon>
        <taxon>Murinae</taxon>
        <taxon>Rattus</taxon>
    </lineage>
</organism>
<dbReference type="EC" id="2.3.1.225" evidence="2"/>
<dbReference type="EC" id="2.3.1.-" evidence="2"/>
<dbReference type="EMBL" id="AY886522">
    <property type="protein sequence ID" value="AAX73384.1"/>
    <property type="molecule type" value="mRNA"/>
</dbReference>
<dbReference type="EMBL" id="AC133294">
    <property type="status" value="NOT_ANNOTATED_CDS"/>
    <property type="molecule type" value="Genomic_DNA"/>
</dbReference>
<dbReference type="EMBL" id="CH473954">
    <property type="protein sequence ID" value="EDL76770.1"/>
    <property type="molecule type" value="Genomic_DNA"/>
</dbReference>
<dbReference type="EMBL" id="BC128697">
    <property type="protein sequence ID" value="AAI28698.1"/>
    <property type="molecule type" value="mRNA"/>
</dbReference>
<dbReference type="RefSeq" id="NP_001034103.1">
    <property type="nucleotide sequence ID" value="NM_001039014.3"/>
</dbReference>
<dbReference type="RefSeq" id="XP_006244250.1">
    <property type="nucleotide sequence ID" value="XM_006244188.3"/>
</dbReference>
<dbReference type="RefSeq" id="XP_063121382.1">
    <property type="nucleotide sequence ID" value="XM_063265312.1"/>
</dbReference>
<dbReference type="SMR" id="Q2TGK3"/>
<dbReference type="FunCoup" id="Q2TGK3">
    <property type="interactions" value="1698"/>
</dbReference>
<dbReference type="STRING" id="10116.ENSRNOP00000005817"/>
<dbReference type="GlyGen" id="Q2TGK3">
    <property type="glycosylation" value="1 site"/>
</dbReference>
<dbReference type="iPTMnet" id="Q2TGK3"/>
<dbReference type="PhosphoSitePlus" id="Q2TGK3"/>
<dbReference type="SwissPalm" id="Q2TGK3"/>
<dbReference type="PaxDb" id="10116-ENSRNOP00000005817"/>
<dbReference type="Ensembl" id="ENSRNOT00000005817.7">
    <property type="protein sequence ID" value="ENSRNOP00000005817.5"/>
    <property type="gene ID" value="ENSRNOG00000004344.8"/>
</dbReference>
<dbReference type="GeneID" id="301081"/>
<dbReference type="KEGG" id="rno:301081"/>
<dbReference type="UCSC" id="RGD:1309041">
    <property type="organism name" value="rat"/>
</dbReference>
<dbReference type="AGR" id="RGD:1309041"/>
<dbReference type="CTD" id="51304"/>
<dbReference type="RGD" id="1309041">
    <property type="gene designation" value="Zdhhc3"/>
</dbReference>
<dbReference type="eggNOG" id="KOG1311">
    <property type="taxonomic scope" value="Eukaryota"/>
</dbReference>
<dbReference type="GeneTree" id="ENSGT00940000155721"/>
<dbReference type="HOGENOM" id="CLU_048061_1_1_1"/>
<dbReference type="InParanoid" id="Q2TGK3"/>
<dbReference type="OMA" id="HILMCLA"/>
<dbReference type="PhylomeDB" id="Q2TGK3"/>
<dbReference type="TreeFam" id="TF319798"/>
<dbReference type="PRO" id="PR:Q2TGK3"/>
<dbReference type="Proteomes" id="UP000002494">
    <property type="component" value="Chromosome 8"/>
</dbReference>
<dbReference type="Proteomes" id="UP000234681">
    <property type="component" value="Chromosome 8"/>
</dbReference>
<dbReference type="Bgee" id="ENSRNOG00000004344">
    <property type="expression patterns" value="Expressed in lung and 18 other cell types or tissues"/>
</dbReference>
<dbReference type="ExpressionAtlas" id="Q2TGK3">
    <property type="expression patterns" value="baseline and differential"/>
</dbReference>
<dbReference type="GO" id="GO:0005783">
    <property type="term" value="C:endoplasmic reticulum"/>
    <property type="evidence" value="ECO:0000318"/>
    <property type="project" value="GO_Central"/>
</dbReference>
<dbReference type="GO" id="GO:0005794">
    <property type="term" value="C:Golgi apparatus"/>
    <property type="evidence" value="ECO:0000314"/>
    <property type="project" value="UniProtKB"/>
</dbReference>
<dbReference type="GO" id="GO:0000139">
    <property type="term" value="C:Golgi membrane"/>
    <property type="evidence" value="ECO:0007669"/>
    <property type="project" value="UniProtKB-SubCell"/>
</dbReference>
<dbReference type="GO" id="GO:0016409">
    <property type="term" value="F:palmitoyltransferase activity"/>
    <property type="evidence" value="ECO:0000266"/>
    <property type="project" value="RGD"/>
</dbReference>
<dbReference type="GO" id="GO:0042803">
    <property type="term" value="F:protein homodimerization activity"/>
    <property type="evidence" value="ECO:0000266"/>
    <property type="project" value="RGD"/>
</dbReference>
<dbReference type="GO" id="GO:0019705">
    <property type="term" value="F:protein-cysteine S-myristoyltransferase activity"/>
    <property type="evidence" value="ECO:0007669"/>
    <property type="project" value="RHEA"/>
</dbReference>
<dbReference type="GO" id="GO:0019706">
    <property type="term" value="F:protein-cysteine S-palmitoyltransferase activity"/>
    <property type="evidence" value="ECO:0000266"/>
    <property type="project" value="RGD"/>
</dbReference>
<dbReference type="GO" id="GO:0140439">
    <property type="term" value="F:protein-cysteine S-stearoyltransferase activity"/>
    <property type="evidence" value="ECO:0007669"/>
    <property type="project" value="RHEA"/>
</dbReference>
<dbReference type="GO" id="GO:0044873">
    <property type="term" value="P:lipoprotein localization to membrane"/>
    <property type="evidence" value="ECO:0000266"/>
    <property type="project" value="RGD"/>
</dbReference>
<dbReference type="GO" id="GO:1902685">
    <property type="term" value="P:positive regulation of receptor localization to synapse"/>
    <property type="evidence" value="ECO:0000266"/>
    <property type="project" value="RGD"/>
</dbReference>
<dbReference type="GO" id="GO:0032230">
    <property type="term" value="P:positive regulation of synaptic transmission, GABAergic"/>
    <property type="evidence" value="ECO:0000266"/>
    <property type="project" value="RGD"/>
</dbReference>
<dbReference type="GO" id="GO:0034165">
    <property type="term" value="P:positive regulation of toll-like receptor 9 signaling pathway"/>
    <property type="evidence" value="ECO:0000266"/>
    <property type="project" value="RGD"/>
</dbReference>
<dbReference type="GO" id="GO:1903546">
    <property type="term" value="P:protein localization to photoreceptor outer segment"/>
    <property type="evidence" value="ECO:0000266"/>
    <property type="project" value="RGD"/>
</dbReference>
<dbReference type="GO" id="GO:0072659">
    <property type="term" value="P:protein localization to plasma membrane"/>
    <property type="evidence" value="ECO:0000266"/>
    <property type="project" value="RGD"/>
</dbReference>
<dbReference type="GO" id="GO:0006605">
    <property type="term" value="P:protein targeting"/>
    <property type="evidence" value="ECO:0000266"/>
    <property type="project" value="RGD"/>
</dbReference>
<dbReference type="GO" id="GO:0006612">
    <property type="term" value="P:protein targeting to membrane"/>
    <property type="evidence" value="ECO:0000318"/>
    <property type="project" value="GO_Central"/>
</dbReference>
<dbReference type="GO" id="GO:0008277">
    <property type="term" value="P:regulation of G protein-coupled receptor signaling pathway"/>
    <property type="evidence" value="ECO:0000266"/>
    <property type="project" value="RGD"/>
</dbReference>
<dbReference type="GO" id="GO:0036462">
    <property type="term" value="P:TRAIL-activated apoptotic signaling pathway"/>
    <property type="evidence" value="ECO:0000266"/>
    <property type="project" value="RGD"/>
</dbReference>
<dbReference type="InterPro" id="IPR001594">
    <property type="entry name" value="Palmitoyltrfase_DHHC"/>
</dbReference>
<dbReference type="InterPro" id="IPR039859">
    <property type="entry name" value="PFA4/ZDH16/20/ERF2-like"/>
</dbReference>
<dbReference type="PANTHER" id="PTHR12246">
    <property type="entry name" value="PALMITOYLTRANSFERASE ZDHHC16"/>
    <property type="match status" value="1"/>
</dbReference>
<dbReference type="Pfam" id="PF01529">
    <property type="entry name" value="DHHC"/>
    <property type="match status" value="1"/>
</dbReference>
<dbReference type="PROSITE" id="PS50216">
    <property type="entry name" value="DHHC"/>
    <property type="match status" value="1"/>
</dbReference>
<name>ZDHC3_RAT</name>
<protein>
    <recommendedName>
        <fullName evidence="7">Palmitoyltransferase ZDHHC3</fullName>
        <ecNumber evidence="2">2.3.1.225</ecNumber>
    </recommendedName>
    <alternativeName>
        <fullName evidence="2">Acyltransferase ZDHHC3</fullName>
        <ecNumber evidence="2">2.3.1.-</ecNumber>
    </alternativeName>
    <alternativeName>
        <fullName evidence="8">Zinc finger DHHC domain-containing protein 3</fullName>
    </alternativeName>
</protein>
<evidence type="ECO:0000250" key="1">
    <source>
        <dbReference type="UniProtKB" id="Q8IUH5"/>
    </source>
</evidence>
<evidence type="ECO:0000250" key="2">
    <source>
        <dbReference type="UniProtKB" id="Q8R173"/>
    </source>
</evidence>
<evidence type="ECO:0000250" key="3">
    <source>
        <dbReference type="UniProtKB" id="Q9NYG2"/>
    </source>
</evidence>
<evidence type="ECO:0000255" key="4"/>
<evidence type="ECO:0000255" key="5">
    <source>
        <dbReference type="PROSITE-ProRule" id="PRU00067"/>
    </source>
</evidence>
<evidence type="ECO:0000269" key="6">
    <source>
    </source>
</evidence>
<evidence type="ECO:0000305" key="7"/>
<evidence type="ECO:0000312" key="8">
    <source>
        <dbReference type="RGD" id="1309041"/>
    </source>
</evidence>
<accession>Q2TGK3</accession>
<comment type="function">
    <text evidence="2 3 6">Golgi-localized palmitoyltransferase that catalyzes the addition of palmitate onto various protein substrates. Has no stringent fatty acid selectivity and in addition to palmitate can also transfer onto target proteins myristate from tetradecanoyl-CoA and stearate from octadecanoyl-CoA (By similarity). Plays an important role in G protein-coupled receptor signaling pathways involving GNAQ and potentially other heterotrimeric G proteins by regulating their dynamic association with the plasma membrane (By similarity). Palmitoylates ITGA6 and ITGB4, thereby regulating the alpha-6/beta-4 integrin localization, expression and function in cell adhesion to laminin (By similarity). Plays a role in the TRAIL-activated apoptotic signaling pathway most probably through the palmitoylation and localization to the plasma membrane of TNFRSF10A (By similarity). In the brain, by palmitoylating the gamma subunit GABRG2 of GABA(A) receptors and regulating their postsynaptic accumulation, plays a role in synaptic GABAergic inhibitory function and GABAergic innervation. Palmitoylates the neuronal protein GAP43 which is also involved in the formation of GABAergic synapses. Palmitoylates NCDN thereby regulating its association with endosome membranes. Probably palmitoylates PRCD and is involved in its proper localization within the photoreceptor. Could mediate the palmitoylation of NCAM1 and regulate neurite outgrowth. Could palmitoylate DNAJC5 and regulate its localization to Golgi membranes (By similarity). Also constitutively palmitoylates DLG4 (PubMed:19596852). May also palmitoylate SNAP25. Could palmitoylate the glutamate receptors GRIA1 and GRIA2 but this has not been confirmed in vivo (By similarity). Could also palmitoylate the D(2) dopamine receptor DRD2 (By similarity). May also palmitoylate LAMTOR1, promoting its localization to lysosomal membranes (By similarity). Palmitoylates the Toll-like receptor 9/TLR9 in the Golgi and thereby regulates TLR9 trafficking to endosomes (By similarity). May palmitoylate CALHM1 and CALHM3 subunits of gustatory voltage-gated ion channels and modulate channel gating and kinetics.</text>
</comment>
<comment type="catalytic activity">
    <reaction evidence="2">
        <text>L-cysteinyl-[protein] + hexadecanoyl-CoA = S-hexadecanoyl-L-cysteinyl-[protein] + CoA</text>
        <dbReference type="Rhea" id="RHEA:36683"/>
        <dbReference type="Rhea" id="RHEA-COMP:10131"/>
        <dbReference type="Rhea" id="RHEA-COMP:11032"/>
        <dbReference type="ChEBI" id="CHEBI:29950"/>
        <dbReference type="ChEBI" id="CHEBI:57287"/>
        <dbReference type="ChEBI" id="CHEBI:57379"/>
        <dbReference type="ChEBI" id="CHEBI:74151"/>
        <dbReference type="EC" id="2.3.1.225"/>
    </reaction>
    <physiologicalReaction direction="left-to-right" evidence="2">
        <dbReference type="Rhea" id="RHEA:36684"/>
    </physiologicalReaction>
</comment>
<comment type="catalytic activity">
    <reaction evidence="2">
        <text>L-cysteinyl-[protein] + tetradecanoyl-CoA = S-tetradecanoyl-L-cysteinyl-[protein] + CoA</text>
        <dbReference type="Rhea" id="RHEA:59736"/>
        <dbReference type="Rhea" id="RHEA-COMP:10131"/>
        <dbReference type="Rhea" id="RHEA-COMP:15433"/>
        <dbReference type="ChEBI" id="CHEBI:29950"/>
        <dbReference type="ChEBI" id="CHEBI:57287"/>
        <dbReference type="ChEBI" id="CHEBI:57385"/>
        <dbReference type="ChEBI" id="CHEBI:143199"/>
    </reaction>
    <physiologicalReaction direction="left-to-right" evidence="2">
        <dbReference type="Rhea" id="RHEA:59737"/>
    </physiologicalReaction>
</comment>
<comment type="catalytic activity">
    <reaction evidence="2">
        <text>L-cysteinyl-[protein] + octadecanoyl-CoA = S-octadecanoyl-L-cysteinyl-[protein] + CoA</text>
        <dbReference type="Rhea" id="RHEA:59740"/>
        <dbReference type="Rhea" id="RHEA-COMP:10131"/>
        <dbReference type="Rhea" id="RHEA-COMP:15434"/>
        <dbReference type="ChEBI" id="CHEBI:29950"/>
        <dbReference type="ChEBI" id="CHEBI:57287"/>
        <dbReference type="ChEBI" id="CHEBI:57394"/>
        <dbReference type="ChEBI" id="CHEBI:143200"/>
    </reaction>
    <physiologicalReaction direction="left-to-right" evidence="2">
        <dbReference type="Rhea" id="RHEA:59741"/>
    </physiologicalReaction>
</comment>
<comment type="subunit">
    <text evidence="2 3">Monomer. Homooligomers. The monomeric form has a higher catalytic activity. Forms heterooligomers with ZDHHC7 (By similarity). Interacts with TNFRSF10A (By similarity).</text>
</comment>
<comment type="subcellular location">
    <subcellularLocation>
        <location evidence="6">Golgi apparatus membrane</location>
        <topology evidence="4">Multi-pass membrane protein</topology>
    </subcellularLocation>
    <text evidence="2">Localizes to the Golgi cis cisterna.</text>
</comment>
<comment type="domain">
    <text evidence="1">The DHHC domain is required for palmitoyltransferase activity.</text>
</comment>
<comment type="PTM">
    <text evidence="2">Phosphorylation by FGFR1 and SRC probably regulates the palmitoyltransferase activity.</text>
</comment>
<comment type="PTM">
    <text evidence="2">Autopalmitoylated.</text>
</comment>
<comment type="similarity">
    <text evidence="7">Belongs to the DHHC palmitoyltransferase family.</text>
</comment>